<comment type="function">
    <text evidence="4">E3 ubiquitin-protein ligase able to catalyze polyubiquitination with ubiquitin-conjugating enzyme E2 UBC8 in vitro.</text>
</comment>
<comment type="catalytic activity">
    <reaction evidence="4">
        <text>S-ubiquitinyl-[E2 ubiquitin-conjugating enzyme]-L-cysteine + [acceptor protein]-L-lysine = [E2 ubiquitin-conjugating enzyme]-L-cysteine + N(6)-ubiquitinyl-[acceptor protein]-L-lysine.</text>
        <dbReference type="EC" id="2.3.2.27"/>
    </reaction>
</comment>
<comment type="pathway">
    <text>Protein modification; protein ubiquitination.</text>
</comment>
<comment type="subcellular location">
    <subcellularLocation>
        <location evidence="5">Membrane</location>
        <topology evidence="5">Single-pass membrane protein</topology>
    </subcellularLocation>
</comment>
<comment type="domain">
    <text evidence="1">The RING-type zinc finger domain mediates binding to an E2 ubiquitin-conjugating enzyme.</text>
</comment>
<comment type="similarity">
    <text evidence="5">Belongs to the RING-type zinc finger family. ATL subfamily.</text>
</comment>
<comment type="sequence caution" evidence="5">
    <conflict type="erroneous initiation">
        <sequence resource="EMBL-CDS" id="AAU84668"/>
    </conflict>
</comment>
<comment type="sequence caution" evidence="5">
    <conflict type="erroneous initiation">
        <sequence resource="EMBL-CDS" id="AAV43780"/>
    </conflict>
</comment>
<gene>
    <name type="primary">ATL42</name>
    <name type="ordered locus">At4g28890</name>
    <name type="ORF">F25O24.10</name>
</gene>
<sequence>MYQIFFFFLPLLHSYASAQTPPPFRNGDLVANFEPSLAVVTGVLAIMFALTFVLLVYAKCCHIDLRSGSGDRRRHDRRLRQGIFFNRSTASSDRFSGLDKTAIESLPLFRFSALKGSKQGLDCSVCLSKFESVEILRLLPKCRHAFHIGCIDQWLEQHATCPLCRDRVSMEEDSSVLTNGNSFRFLNQSEIREDSSLELYIEREEEEERIHREELSGSSRFSIGESFRKILKLGNKEKTLLDEHVNDKDEKKLMHKFNHRIVVSDVVFKNRWSNVSSSDLMFLNSEMVNSISSERFSSLDHVKRGDEEDQIGILRIKEEMEAKRMLENKLTSMTTMFSSENGDSGSKSRSVMIEPGRRSVSDITAVPRLSISIHGDCSGSAAETASALQNGGNETEERRRRLWLPIARKTAQWFANREKRSQINTTHQHFDV</sequence>
<dbReference type="EC" id="2.3.2.27" evidence="4"/>
<dbReference type="EMBL" id="DQ059125">
    <property type="protein sequence ID" value="AAY57611.1"/>
    <property type="molecule type" value="mRNA"/>
</dbReference>
<dbReference type="EMBL" id="AL078469">
    <property type="protein sequence ID" value="CAB43903.1"/>
    <property type="molecule type" value="Genomic_DNA"/>
</dbReference>
<dbReference type="EMBL" id="AL161573">
    <property type="protein sequence ID" value="CAB81477.1"/>
    <property type="molecule type" value="Genomic_DNA"/>
</dbReference>
<dbReference type="EMBL" id="CP002687">
    <property type="protein sequence ID" value="AEE85559.1"/>
    <property type="molecule type" value="Genomic_DNA"/>
</dbReference>
<dbReference type="EMBL" id="BX828195">
    <property type="status" value="NOT_ANNOTATED_CDS"/>
    <property type="molecule type" value="mRNA"/>
</dbReference>
<dbReference type="EMBL" id="BT015731">
    <property type="protein sequence ID" value="AAU84668.1"/>
    <property type="status" value="ALT_INIT"/>
    <property type="molecule type" value="mRNA"/>
</dbReference>
<dbReference type="EMBL" id="BT020178">
    <property type="protein sequence ID" value="AAV43780.1"/>
    <property type="status" value="ALT_INIT"/>
    <property type="molecule type" value="mRNA"/>
</dbReference>
<dbReference type="PIR" id="T08944">
    <property type="entry name" value="T08944"/>
</dbReference>
<dbReference type="RefSeq" id="NP_194618.3">
    <property type="nucleotide sequence ID" value="NM_119033.5"/>
</dbReference>
<dbReference type="SMR" id="Q5XF85"/>
<dbReference type="FunCoup" id="Q5XF85">
    <property type="interactions" value="485"/>
</dbReference>
<dbReference type="STRING" id="3702.Q5XF85"/>
<dbReference type="iPTMnet" id="Q5XF85"/>
<dbReference type="PaxDb" id="3702-AT4G28890.1"/>
<dbReference type="ProteomicsDB" id="246567"/>
<dbReference type="EnsemblPlants" id="AT4G28890.1">
    <property type="protein sequence ID" value="AT4G28890.1"/>
    <property type="gene ID" value="AT4G28890"/>
</dbReference>
<dbReference type="GeneID" id="829010"/>
<dbReference type="Gramene" id="AT4G28890.1">
    <property type="protein sequence ID" value="AT4G28890.1"/>
    <property type="gene ID" value="AT4G28890"/>
</dbReference>
<dbReference type="KEGG" id="ath:AT4G28890"/>
<dbReference type="Araport" id="AT4G28890"/>
<dbReference type="TAIR" id="AT4G28890">
    <property type="gene designation" value="ATL42"/>
</dbReference>
<dbReference type="eggNOG" id="KOG0800">
    <property type="taxonomic scope" value="Eukaryota"/>
</dbReference>
<dbReference type="HOGENOM" id="CLU_046350_0_0_1"/>
<dbReference type="InParanoid" id="Q5XF85"/>
<dbReference type="OMA" id="WFPIAKR"/>
<dbReference type="PhylomeDB" id="Q5XF85"/>
<dbReference type="UniPathway" id="UPA00143"/>
<dbReference type="PRO" id="PR:Q5XF85"/>
<dbReference type="Proteomes" id="UP000006548">
    <property type="component" value="Chromosome 4"/>
</dbReference>
<dbReference type="ExpressionAtlas" id="Q5XF85">
    <property type="expression patterns" value="baseline and differential"/>
</dbReference>
<dbReference type="GO" id="GO:0016020">
    <property type="term" value="C:membrane"/>
    <property type="evidence" value="ECO:0007669"/>
    <property type="project" value="UniProtKB-SubCell"/>
</dbReference>
<dbReference type="GO" id="GO:0004842">
    <property type="term" value="F:ubiquitin-protein transferase activity"/>
    <property type="evidence" value="ECO:0000314"/>
    <property type="project" value="TAIR"/>
</dbReference>
<dbReference type="GO" id="GO:0008270">
    <property type="term" value="F:zinc ion binding"/>
    <property type="evidence" value="ECO:0007669"/>
    <property type="project" value="UniProtKB-KW"/>
</dbReference>
<dbReference type="GO" id="GO:0016567">
    <property type="term" value="P:protein ubiquitination"/>
    <property type="evidence" value="ECO:0000314"/>
    <property type="project" value="UniProtKB"/>
</dbReference>
<dbReference type="CDD" id="cd16461">
    <property type="entry name" value="RING-H2_EL5-like"/>
    <property type="match status" value="1"/>
</dbReference>
<dbReference type="FunFam" id="3.30.40.10:FF:000285">
    <property type="entry name" value="RING-H2 finger protein ATL43"/>
    <property type="match status" value="1"/>
</dbReference>
<dbReference type="Gene3D" id="3.30.40.10">
    <property type="entry name" value="Zinc/RING finger domain, C3HC4 (zinc finger)"/>
    <property type="match status" value="1"/>
</dbReference>
<dbReference type="InterPro" id="IPR001841">
    <property type="entry name" value="Znf_RING"/>
</dbReference>
<dbReference type="InterPro" id="IPR013083">
    <property type="entry name" value="Znf_RING/FYVE/PHD"/>
</dbReference>
<dbReference type="PANTHER" id="PTHR46539">
    <property type="entry name" value="E3 UBIQUITIN-PROTEIN LIGASE ATL42"/>
    <property type="match status" value="1"/>
</dbReference>
<dbReference type="PANTHER" id="PTHR46539:SF1">
    <property type="entry name" value="E3 UBIQUITIN-PROTEIN LIGASE ATL42"/>
    <property type="match status" value="1"/>
</dbReference>
<dbReference type="Pfam" id="PF13639">
    <property type="entry name" value="zf-RING_2"/>
    <property type="match status" value="1"/>
</dbReference>
<dbReference type="SMART" id="SM00184">
    <property type="entry name" value="RING"/>
    <property type="match status" value="1"/>
</dbReference>
<dbReference type="SUPFAM" id="SSF57850">
    <property type="entry name" value="RING/U-box"/>
    <property type="match status" value="1"/>
</dbReference>
<dbReference type="PROSITE" id="PS50089">
    <property type="entry name" value="ZF_RING_2"/>
    <property type="match status" value="1"/>
</dbReference>
<evidence type="ECO:0000250" key="1"/>
<evidence type="ECO:0000255" key="2"/>
<evidence type="ECO:0000255" key="3">
    <source>
        <dbReference type="PROSITE-ProRule" id="PRU00175"/>
    </source>
</evidence>
<evidence type="ECO:0000269" key="4">
    <source>
    </source>
</evidence>
<evidence type="ECO:0000305" key="5"/>
<accession>Q5XF85</accession>
<accession>Q4TU11</accession>
<accession>Q9SV57</accession>
<organism>
    <name type="scientific">Arabidopsis thaliana</name>
    <name type="common">Mouse-ear cress</name>
    <dbReference type="NCBI Taxonomy" id="3702"/>
    <lineage>
        <taxon>Eukaryota</taxon>
        <taxon>Viridiplantae</taxon>
        <taxon>Streptophyta</taxon>
        <taxon>Embryophyta</taxon>
        <taxon>Tracheophyta</taxon>
        <taxon>Spermatophyta</taxon>
        <taxon>Magnoliopsida</taxon>
        <taxon>eudicotyledons</taxon>
        <taxon>Gunneridae</taxon>
        <taxon>Pentapetalae</taxon>
        <taxon>rosids</taxon>
        <taxon>malvids</taxon>
        <taxon>Brassicales</taxon>
        <taxon>Brassicaceae</taxon>
        <taxon>Camelineae</taxon>
        <taxon>Arabidopsis</taxon>
    </lineage>
</organism>
<name>ATL42_ARATH</name>
<reference key="1">
    <citation type="journal article" date="2005" name="Plant Physiol.">
        <title>Functional analysis of the RING-type ubiquitin ligase family of Arabidopsis.</title>
        <authorList>
            <person name="Stone S.L."/>
            <person name="Hauksdottir H."/>
            <person name="Troy A."/>
            <person name="Herschleb J."/>
            <person name="Kraft E."/>
            <person name="Callis J."/>
        </authorList>
    </citation>
    <scope>NUCLEOTIDE SEQUENCE [MRNA]</scope>
    <scope>FUNCTION</scope>
    <scope>CATALYTIC ACTIVITY</scope>
    <source>
        <strain>cv. Columbia</strain>
        <tissue>Leaf</tissue>
    </source>
</reference>
<reference key="2">
    <citation type="journal article" date="1999" name="Nature">
        <title>Sequence and analysis of chromosome 4 of the plant Arabidopsis thaliana.</title>
        <authorList>
            <person name="Mayer K.F.X."/>
            <person name="Schueller C."/>
            <person name="Wambutt R."/>
            <person name="Murphy G."/>
            <person name="Volckaert G."/>
            <person name="Pohl T."/>
            <person name="Duesterhoeft A."/>
            <person name="Stiekema W."/>
            <person name="Entian K.-D."/>
            <person name="Terryn N."/>
            <person name="Harris B."/>
            <person name="Ansorge W."/>
            <person name="Brandt P."/>
            <person name="Grivell L.A."/>
            <person name="Rieger M."/>
            <person name="Weichselgartner M."/>
            <person name="de Simone V."/>
            <person name="Obermaier B."/>
            <person name="Mache R."/>
            <person name="Mueller M."/>
            <person name="Kreis M."/>
            <person name="Delseny M."/>
            <person name="Puigdomenech P."/>
            <person name="Watson M."/>
            <person name="Schmidtheini T."/>
            <person name="Reichert B."/>
            <person name="Portetelle D."/>
            <person name="Perez-Alonso M."/>
            <person name="Boutry M."/>
            <person name="Bancroft I."/>
            <person name="Vos P."/>
            <person name="Hoheisel J."/>
            <person name="Zimmermann W."/>
            <person name="Wedler H."/>
            <person name="Ridley P."/>
            <person name="Langham S.-A."/>
            <person name="McCullagh B."/>
            <person name="Bilham L."/>
            <person name="Robben J."/>
            <person name="van der Schueren J."/>
            <person name="Grymonprez B."/>
            <person name="Chuang Y.-J."/>
            <person name="Vandenbussche F."/>
            <person name="Braeken M."/>
            <person name="Weltjens I."/>
            <person name="Voet M."/>
            <person name="Bastiaens I."/>
            <person name="Aert R."/>
            <person name="Defoor E."/>
            <person name="Weitzenegger T."/>
            <person name="Bothe G."/>
            <person name="Ramsperger U."/>
            <person name="Hilbert H."/>
            <person name="Braun M."/>
            <person name="Holzer E."/>
            <person name="Brandt A."/>
            <person name="Peters S."/>
            <person name="van Staveren M."/>
            <person name="Dirkse W."/>
            <person name="Mooijman P."/>
            <person name="Klein Lankhorst R."/>
            <person name="Rose M."/>
            <person name="Hauf J."/>
            <person name="Koetter P."/>
            <person name="Berneiser S."/>
            <person name="Hempel S."/>
            <person name="Feldpausch M."/>
            <person name="Lamberth S."/>
            <person name="Van den Daele H."/>
            <person name="De Keyser A."/>
            <person name="Buysshaert C."/>
            <person name="Gielen J."/>
            <person name="Villarroel R."/>
            <person name="De Clercq R."/>
            <person name="van Montagu M."/>
            <person name="Rogers J."/>
            <person name="Cronin A."/>
            <person name="Quail M.A."/>
            <person name="Bray-Allen S."/>
            <person name="Clark L."/>
            <person name="Doggett J."/>
            <person name="Hall S."/>
            <person name="Kay M."/>
            <person name="Lennard N."/>
            <person name="McLay K."/>
            <person name="Mayes R."/>
            <person name="Pettett A."/>
            <person name="Rajandream M.A."/>
            <person name="Lyne M."/>
            <person name="Benes V."/>
            <person name="Rechmann S."/>
            <person name="Borkova D."/>
            <person name="Bloecker H."/>
            <person name="Scharfe M."/>
            <person name="Grimm M."/>
            <person name="Loehnert T.-H."/>
            <person name="Dose S."/>
            <person name="de Haan M."/>
            <person name="Maarse A.C."/>
            <person name="Schaefer M."/>
            <person name="Mueller-Auer S."/>
            <person name="Gabel C."/>
            <person name="Fuchs M."/>
            <person name="Fartmann B."/>
            <person name="Granderath K."/>
            <person name="Dauner D."/>
            <person name="Herzl A."/>
            <person name="Neumann S."/>
            <person name="Argiriou A."/>
            <person name="Vitale D."/>
            <person name="Liguori R."/>
            <person name="Piravandi E."/>
            <person name="Massenet O."/>
            <person name="Quigley F."/>
            <person name="Clabauld G."/>
            <person name="Muendlein A."/>
            <person name="Felber R."/>
            <person name="Schnabl S."/>
            <person name="Hiller R."/>
            <person name="Schmidt W."/>
            <person name="Lecharny A."/>
            <person name="Aubourg S."/>
            <person name="Chefdor F."/>
            <person name="Cooke R."/>
            <person name="Berger C."/>
            <person name="Monfort A."/>
            <person name="Casacuberta E."/>
            <person name="Gibbons T."/>
            <person name="Weber N."/>
            <person name="Vandenbol M."/>
            <person name="Bargues M."/>
            <person name="Terol J."/>
            <person name="Torres A."/>
            <person name="Perez-Perez A."/>
            <person name="Purnelle B."/>
            <person name="Bent E."/>
            <person name="Johnson S."/>
            <person name="Tacon D."/>
            <person name="Jesse T."/>
            <person name="Heijnen L."/>
            <person name="Schwarz S."/>
            <person name="Scholler P."/>
            <person name="Heber S."/>
            <person name="Francs P."/>
            <person name="Bielke C."/>
            <person name="Frishman D."/>
            <person name="Haase D."/>
            <person name="Lemcke K."/>
            <person name="Mewes H.-W."/>
            <person name="Stocker S."/>
            <person name="Zaccaria P."/>
            <person name="Bevan M."/>
            <person name="Wilson R.K."/>
            <person name="de la Bastide M."/>
            <person name="Habermann K."/>
            <person name="Parnell L."/>
            <person name="Dedhia N."/>
            <person name="Gnoj L."/>
            <person name="Schutz K."/>
            <person name="Huang E."/>
            <person name="Spiegel L."/>
            <person name="Sekhon M."/>
            <person name="Murray J."/>
            <person name="Sheet P."/>
            <person name="Cordes M."/>
            <person name="Abu-Threideh J."/>
            <person name="Stoneking T."/>
            <person name="Kalicki J."/>
            <person name="Graves T."/>
            <person name="Harmon G."/>
            <person name="Edwards J."/>
            <person name="Latreille P."/>
            <person name="Courtney L."/>
            <person name="Cloud J."/>
            <person name="Abbott A."/>
            <person name="Scott K."/>
            <person name="Johnson D."/>
            <person name="Minx P."/>
            <person name="Bentley D."/>
            <person name="Fulton B."/>
            <person name="Miller N."/>
            <person name="Greco T."/>
            <person name="Kemp K."/>
            <person name="Kramer J."/>
            <person name="Fulton L."/>
            <person name="Mardis E."/>
            <person name="Dante M."/>
            <person name="Pepin K."/>
            <person name="Hillier L.W."/>
            <person name="Nelson J."/>
            <person name="Spieth J."/>
            <person name="Ryan E."/>
            <person name="Andrews S."/>
            <person name="Geisel C."/>
            <person name="Layman D."/>
            <person name="Du H."/>
            <person name="Ali J."/>
            <person name="Berghoff A."/>
            <person name="Jones K."/>
            <person name="Drone K."/>
            <person name="Cotton M."/>
            <person name="Joshu C."/>
            <person name="Antonoiu B."/>
            <person name="Zidanic M."/>
            <person name="Strong C."/>
            <person name="Sun H."/>
            <person name="Lamar B."/>
            <person name="Yordan C."/>
            <person name="Ma P."/>
            <person name="Zhong J."/>
            <person name="Preston R."/>
            <person name="Vil D."/>
            <person name="Shekher M."/>
            <person name="Matero A."/>
            <person name="Shah R."/>
            <person name="Swaby I.K."/>
            <person name="O'Shaughnessy A."/>
            <person name="Rodriguez M."/>
            <person name="Hoffman J."/>
            <person name="Till S."/>
            <person name="Granat S."/>
            <person name="Shohdy N."/>
            <person name="Hasegawa A."/>
            <person name="Hameed A."/>
            <person name="Lodhi M."/>
            <person name="Johnson A."/>
            <person name="Chen E."/>
            <person name="Marra M.A."/>
            <person name="Martienssen R."/>
            <person name="McCombie W.R."/>
        </authorList>
    </citation>
    <scope>NUCLEOTIDE SEQUENCE [LARGE SCALE GENOMIC DNA]</scope>
    <source>
        <strain>cv. Columbia</strain>
    </source>
</reference>
<reference key="3">
    <citation type="journal article" date="2017" name="Plant J.">
        <title>Araport11: a complete reannotation of the Arabidopsis thaliana reference genome.</title>
        <authorList>
            <person name="Cheng C.Y."/>
            <person name="Krishnakumar V."/>
            <person name="Chan A.P."/>
            <person name="Thibaud-Nissen F."/>
            <person name="Schobel S."/>
            <person name="Town C.D."/>
        </authorList>
    </citation>
    <scope>GENOME REANNOTATION</scope>
    <source>
        <strain>cv. Columbia</strain>
    </source>
</reference>
<reference key="4">
    <citation type="journal article" date="2004" name="Genome Res.">
        <title>Whole genome sequence comparisons and 'full-length' cDNA sequences: a combined approach to evaluate and improve Arabidopsis genome annotation.</title>
        <authorList>
            <person name="Castelli V."/>
            <person name="Aury J.-M."/>
            <person name="Jaillon O."/>
            <person name="Wincker P."/>
            <person name="Clepet C."/>
            <person name="Menard M."/>
            <person name="Cruaud C."/>
            <person name="Quetier F."/>
            <person name="Scarpelli C."/>
            <person name="Schaechter V."/>
            <person name="Temple G."/>
            <person name="Caboche M."/>
            <person name="Weissenbach J."/>
            <person name="Salanoubat M."/>
        </authorList>
    </citation>
    <scope>NUCLEOTIDE SEQUENCE [LARGE SCALE MRNA] OF 7-432</scope>
    <source>
        <strain>cv. Columbia</strain>
    </source>
</reference>
<reference key="5">
    <citation type="submission" date="2004-11" db="EMBL/GenBank/DDBJ databases">
        <title>Arabidopsis ORF clones.</title>
        <authorList>
            <person name="Shinn P."/>
            <person name="Chen H."/>
            <person name="Cheuk R.F."/>
            <person name="Kim C.J."/>
            <person name="Ecker J.R."/>
        </authorList>
    </citation>
    <scope>NUCLEOTIDE SEQUENCE [LARGE SCALE MRNA] OF 17-432</scope>
    <source>
        <strain>cv. Columbia</strain>
    </source>
</reference>
<reference key="6">
    <citation type="journal article" date="2002" name="Genome Biol.">
        <title>Evaluation and classification of RING-finger domains encoded by the Arabidopsis genome.</title>
        <authorList>
            <person name="Kosarev P."/>
            <person name="Mayer K.F.X."/>
            <person name="Hardtke C.S."/>
        </authorList>
    </citation>
    <scope>GENE FAMILY ORGANIZATION</scope>
</reference>
<reference key="7">
    <citation type="journal article" date="2006" name="J. Mol. Evol.">
        <title>The ATL gene family from Arabidopsis thaliana and Oryza sativa comprises a large number of putative ubiquitin ligases of the RING-H2 type.</title>
        <authorList>
            <person name="Serrano M."/>
            <person name="Parra S."/>
            <person name="Alcaraz L.D."/>
            <person name="Guzman P."/>
        </authorList>
    </citation>
    <scope>NOMENCLATURE</scope>
    <scope>GENE FAMILY ORGANIZATION</scope>
</reference>
<proteinExistence type="evidence at protein level"/>
<feature type="signal peptide" evidence="2">
    <location>
        <begin position="1"/>
        <end position="18"/>
    </location>
</feature>
<feature type="chain" id="PRO_0000030711" description="E3 ubiquitin-protein ligase ATL42">
    <location>
        <begin position="19"/>
        <end position="432"/>
    </location>
</feature>
<feature type="transmembrane region" description="Helical" evidence="2">
    <location>
        <begin position="37"/>
        <end position="57"/>
    </location>
</feature>
<feature type="zinc finger region" description="RING-type; atypical" evidence="3">
    <location>
        <begin position="123"/>
        <end position="165"/>
    </location>
</feature>
<feature type="sequence conflict" description="In Ref. 4; BX828195." evidence="5" ref="4">
    <original>V</original>
    <variation>F</variation>
    <location>
        <position position="133"/>
    </location>
</feature>
<feature type="sequence conflict" description="In Ref. 4; BX828195." evidence="5" ref="4">
    <original>D</original>
    <variation>N</variation>
    <location>
        <position position="166"/>
    </location>
</feature>
<keyword id="KW-0472">Membrane</keyword>
<keyword id="KW-0479">Metal-binding</keyword>
<keyword id="KW-1185">Reference proteome</keyword>
<keyword id="KW-0732">Signal</keyword>
<keyword id="KW-0808">Transferase</keyword>
<keyword id="KW-0812">Transmembrane</keyword>
<keyword id="KW-1133">Transmembrane helix</keyword>
<keyword id="KW-0833">Ubl conjugation pathway</keyword>
<keyword id="KW-0862">Zinc</keyword>
<keyword id="KW-0863">Zinc-finger</keyword>
<protein>
    <recommendedName>
        <fullName>E3 ubiquitin-protein ligase ATL42</fullName>
        <ecNumber evidence="4">2.3.2.27</ecNumber>
    </recommendedName>
    <alternativeName>
        <fullName>RING-H2 finger protein ATL42</fullName>
    </alternativeName>
    <alternativeName>
        <fullName evidence="5">RING-type E3 ubiquitin transferase ATL42</fullName>
    </alternativeName>
</protein>